<proteinExistence type="evidence at transcript level"/>
<name>NCBP2_SALSA</name>
<dbReference type="EMBL" id="BT043732">
    <property type="protein sequence ID" value="ACH70847.1"/>
    <property type="molecule type" value="mRNA"/>
</dbReference>
<dbReference type="EMBL" id="BT058515">
    <property type="protein sequence ID" value="ACN10228.1"/>
    <property type="molecule type" value="mRNA"/>
</dbReference>
<dbReference type="EMBL" id="BT060223">
    <property type="protein sequence ID" value="ACN12583.1"/>
    <property type="molecule type" value="mRNA"/>
</dbReference>
<dbReference type="RefSeq" id="XP_013979037.1">
    <property type="nucleotide sequence ID" value="XM_014123562.1"/>
</dbReference>
<dbReference type="SMR" id="C0H859"/>
<dbReference type="STRING" id="8030.ENSSSAP00000035933"/>
<dbReference type="PaxDb" id="8030-ENSSSAP00000035933"/>
<dbReference type="GeneID" id="100196301"/>
<dbReference type="CTD" id="22916"/>
<dbReference type="Proteomes" id="UP000087266">
    <property type="component" value="Chromosome ssa10"/>
</dbReference>
<dbReference type="GO" id="GO:0005737">
    <property type="term" value="C:cytoplasm"/>
    <property type="evidence" value="ECO:0007669"/>
    <property type="project" value="UniProtKB-SubCell"/>
</dbReference>
<dbReference type="GO" id="GO:0005846">
    <property type="term" value="C:nuclear cap binding complex"/>
    <property type="evidence" value="ECO:0007669"/>
    <property type="project" value="InterPro"/>
</dbReference>
<dbReference type="GO" id="GO:0005634">
    <property type="term" value="C:nucleus"/>
    <property type="evidence" value="ECO:0007669"/>
    <property type="project" value="UniProtKB-SubCell"/>
</dbReference>
<dbReference type="GO" id="GO:0003729">
    <property type="term" value="F:mRNA binding"/>
    <property type="evidence" value="ECO:0000250"/>
    <property type="project" value="UniProtKB"/>
</dbReference>
<dbReference type="GO" id="GO:0000340">
    <property type="term" value="F:RNA 7-methylguanosine cap binding"/>
    <property type="evidence" value="ECO:0000250"/>
    <property type="project" value="UniProtKB"/>
</dbReference>
<dbReference type="GO" id="GO:0017069">
    <property type="term" value="F:snRNA binding"/>
    <property type="evidence" value="ECO:0000250"/>
    <property type="project" value="UniProtKB"/>
</dbReference>
<dbReference type="GO" id="GO:0045292">
    <property type="term" value="P:mRNA cis splicing, via spliceosome"/>
    <property type="evidence" value="ECO:0000250"/>
    <property type="project" value="UniProtKB"/>
</dbReference>
<dbReference type="GO" id="GO:0051028">
    <property type="term" value="P:mRNA transport"/>
    <property type="evidence" value="ECO:0007669"/>
    <property type="project" value="UniProtKB-KW"/>
</dbReference>
<dbReference type="GO" id="GO:0000184">
    <property type="term" value="P:nuclear-transcribed mRNA catabolic process, nonsense-mediated decay"/>
    <property type="evidence" value="ECO:0007669"/>
    <property type="project" value="UniProtKB-KW"/>
</dbReference>
<dbReference type="GO" id="GO:0046833">
    <property type="term" value="P:positive regulation of RNA export from nucleus"/>
    <property type="evidence" value="ECO:0000250"/>
    <property type="project" value="UniProtKB"/>
</dbReference>
<dbReference type="GO" id="GO:0006417">
    <property type="term" value="P:regulation of translation"/>
    <property type="evidence" value="ECO:0007669"/>
    <property type="project" value="UniProtKB-KW"/>
</dbReference>
<dbReference type="GO" id="GO:0031047">
    <property type="term" value="P:regulatory ncRNA-mediated gene silencing"/>
    <property type="evidence" value="ECO:0007669"/>
    <property type="project" value="UniProtKB-KW"/>
</dbReference>
<dbReference type="GO" id="GO:0008380">
    <property type="term" value="P:RNA splicing"/>
    <property type="evidence" value="ECO:0000250"/>
    <property type="project" value="UniProtKB"/>
</dbReference>
<dbReference type="GO" id="GO:0006408">
    <property type="term" value="P:snRNA export from nucleus"/>
    <property type="evidence" value="ECO:0000250"/>
    <property type="project" value="UniProtKB"/>
</dbReference>
<dbReference type="CDD" id="cd12240">
    <property type="entry name" value="RRM_NCBP2"/>
    <property type="match status" value="1"/>
</dbReference>
<dbReference type="FunFam" id="3.30.70.330:FF:000128">
    <property type="entry name" value="Nuclear cap-binding protein subunit 2"/>
    <property type="match status" value="1"/>
</dbReference>
<dbReference type="Gene3D" id="3.30.70.330">
    <property type="match status" value="1"/>
</dbReference>
<dbReference type="InterPro" id="IPR027157">
    <property type="entry name" value="NCBP2"/>
</dbReference>
<dbReference type="InterPro" id="IPR034148">
    <property type="entry name" value="NCBP2_RRM"/>
</dbReference>
<dbReference type="InterPro" id="IPR012677">
    <property type="entry name" value="Nucleotide-bd_a/b_plait_sf"/>
</dbReference>
<dbReference type="InterPro" id="IPR035979">
    <property type="entry name" value="RBD_domain_sf"/>
</dbReference>
<dbReference type="InterPro" id="IPR000504">
    <property type="entry name" value="RRM_dom"/>
</dbReference>
<dbReference type="PANTHER" id="PTHR18847">
    <property type="entry name" value="20 KD NUCLEAR CAP BINDING PROTEIN"/>
    <property type="match status" value="1"/>
</dbReference>
<dbReference type="PANTHER" id="PTHR18847:SF0">
    <property type="entry name" value="NUCLEAR CAP-BINDING PROTEIN SUBUNIT 2"/>
    <property type="match status" value="1"/>
</dbReference>
<dbReference type="Pfam" id="PF00076">
    <property type="entry name" value="RRM_1"/>
    <property type="match status" value="1"/>
</dbReference>
<dbReference type="SMART" id="SM00360">
    <property type="entry name" value="RRM"/>
    <property type="match status" value="1"/>
</dbReference>
<dbReference type="SUPFAM" id="SSF54928">
    <property type="entry name" value="RNA-binding domain, RBD"/>
    <property type="match status" value="1"/>
</dbReference>
<dbReference type="PROSITE" id="PS50102">
    <property type="entry name" value="RRM"/>
    <property type="match status" value="1"/>
</dbReference>
<organism>
    <name type="scientific">Salmo salar</name>
    <name type="common">Atlantic salmon</name>
    <dbReference type="NCBI Taxonomy" id="8030"/>
    <lineage>
        <taxon>Eukaryota</taxon>
        <taxon>Metazoa</taxon>
        <taxon>Chordata</taxon>
        <taxon>Craniata</taxon>
        <taxon>Vertebrata</taxon>
        <taxon>Euteleostomi</taxon>
        <taxon>Actinopterygii</taxon>
        <taxon>Neopterygii</taxon>
        <taxon>Teleostei</taxon>
        <taxon>Protacanthopterygii</taxon>
        <taxon>Salmoniformes</taxon>
        <taxon>Salmonidae</taxon>
        <taxon>Salmoninae</taxon>
        <taxon>Salmo</taxon>
    </lineage>
</organism>
<comment type="function">
    <text evidence="2">Component of the cap-binding complex (CBC), which binds co-transcriptionally to the 5' cap of pre-mRNAs and is involved in various processes such as pre-mRNA splicing, translation regulation, nonsense-mediated mRNA decay, RNA-mediated gene silencing (RNAi) by microRNAs (miRNAs) and mRNA export. The CBC complex is involved in mRNA export from the nucleus, leading to the recruitment of the mRNA export machinery to the 5' end of mRNA and to mRNA export in a 5' to 3' direction through the nuclear pore. The CBC complex is also involved in mediating U snRNA and intronless mRNAs export from the nucleus. The CBC complex is essential for a pioneer round of mRNA translation, before steady state translation when the CBC complex is replaced by cytoplasmic cap-binding protein eIF4E. The pioneer round of mRNA translation mediated by the CBC complex plays a central role in nonsense-mediated mRNA decay (NMD), NMD only taking place in mRNAs bound to the CBC complex, but not on eIF4E-bound mRNAs. The CBC complex enhances NMD in mRNAs containing at least one exon-junction complex (EJC), promoting the interaction between upf1 and upf2. The CBC complex is also involved in 'failsafe' NMD, which is independent of the EJC complex, while it does not participate in Staufen-mediated mRNA decay (SMD). During cell proliferation, the CBC complex is also involved in microRNAs (miRNAs) biogenesis via its interaction with srrt/ars2, thereby being required for miRNA-mediated RNA interference. The CBC complex also acts as a negative regulator of parn, thereby acting as an inhibitor of mRNA deadenylation. In the CBC complex, ncbp2/cbp20 recognizes and binds capped RNAs (m7GpppG-capped RNA) but requires ncbp1/cbp80 to stabilize the movement of its N-terminal loop and lock the CBC into a high affinity cap-binding state with the cap structure. The conventional cap-binding complex with NCBP2 binds both small nuclear RNA (snRNA) and messenger (mRNA) and is involved in their export from the nucleus (By similarity).</text>
</comment>
<comment type="subunit">
    <text evidence="2">Component of the nuclear cap-binding complex (CBC), a heterodimer composed of ncbp1/cbp80 and ncbp2/cbp20 that interacts with m7GpppG-capped RNA.</text>
</comment>
<comment type="subcellular location">
    <subcellularLocation>
        <location evidence="2">Nucleus</location>
    </subcellularLocation>
    <subcellularLocation>
        <location evidence="2">Cytoplasm</location>
    </subcellularLocation>
</comment>
<comment type="similarity">
    <text evidence="5">Belongs to the RRM NCBP2 family.</text>
</comment>
<sequence length="155" mass="17940">MSSKLNALFSDSYVDVSQYRDQHFKGNRYEQEKLLKQANTLYVGNLSFYTTEEQVYELFSKSGDVKRIIIGLDKVKKTACGFCFVEYYTRTDAENAMRFVNGTRLDDRIIRTDWDAGFKEGRQYGRGKSGGQVRDEYRQDYDPARGGYGKVVSRP</sequence>
<accession>C0H859</accession>
<accession>B5DGH3</accession>
<reference key="1">
    <citation type="submission" date="2008-08" db="EMBL/GenBank/DDBJ databases">
        <title>Characterization of full-length sequenced inserts (FLIcs) from a salmo salar white muscle specific cDNA library.</title>
        <authorList>
            <person name="Andreassen R."/>
            <person name="Hoyheim B."/>
        </authorList>
    </citation>
    <scope>NUCLEOTIDE SEQUENCE [MRNA]</scope>
    <source>
        <tissue>White muscle</tissue>
    </source>
</reference>
<reference key="2">
    <citation type="journal article" date="2010" name="BMC Genomics">
        <title>Salmo salar and Esox lucius full-length cDNA sequences reveal changes in evolutionary pressures on a post-tetraploidization genome.</title>
        <authorList>
            <person name="Leong J.S."/>
            <person name="Jantzen S.G."/>
            <person name="von Schalburg K.R."/>
            <person name="Cooper G.A."/>
            <person name="Messmer A.M."/>
            <person name="Liao N.Y."/>
            <person name="Munro S."/>
            <person name="Moore R."/>
            <person name="Holt R.A."/>
            <person name="Jones S.J."/>
            <person name="Davidson W.S."/>
            <person name="Koop B.F."/>
        </authorList>
    </citation>
    <scope>NUCLEOTIDE SEQUENCE [LARGE SCALE MRNA]</scope>
    <source>
        <tissue>Brain</tissue>
    </source>
</reference>
<keyword id="KW-0963">Cytoplasm</keyword>
<keyword id="KW-0507">mRNA processing</keyword>
<keyword id="KW-0508">mRNA splicing</keyword>
<keyword id="KW-0509">mRNA transport</keyword>
<keyword id="KW-0866">Nonsense-mediated mRNA decay</keyword>
<keyword id="KW-0539">Nucleus</keyword>
<keyword id="KW-1185">Reference proteome</keyword>
<keyword id="KW-0694">RNA-binding</keyword>
<keyword id="KW-0943">RNA-mediated gene silencing</keyword>
<keyword id="KW-0810">Translation regulation</keyword>
<keyword id="KW-0813">Transport</keyword>
<protein>
    <recommendedName>
        <fullName>Nuclear cap-binding protein subunit 2</fullName>
    </recommendedName>
    <alternativeName>
        <fullName>20 kDa nuclear cap-binding protein</fullName>
    </alternativeName>
    <alternativeName>
        <fullName>NCBP 20 kDa subunit</fullName>
        <shortName>CBP20</shortName>
    </alternativeName>
</protein>
<evidence type="ECO:0000250" key="1"/>
<evidence type="ECO:0000250" key="2">
    <source>
        <dbReference type="UniProtKB" id="P52298"/>
    </source>
</evidence>
<evidence type="ECO:0000255" key="3">
    <source>
        <dbReference type="PROSITE-ProRule" id="PRU00176"/>
    </source>
</evidence>
<evidence type="ECO:0000256" key="4">
    <source>
        <dbReference type="SAM" id="MobiDB-lite"/>
    </source>
</evidence>
<evidence type="ECO:0000305" key="5"/>
<feature type="chain" id="PRO_0000385253" description="Nuclear cap-binding protein subunit 2">
    <location>
        <begin position="1"/>
        <end position="155"/>
    </location>
</feature>
<feature type="domain" description="RRM" evidence="3">
    <location>
        <begin position="39"/>
        <end position="117"/>
    </location>
</feature>
<feature type="region of interest" description="Disordered" evidence="4">
    <location>
        <begin position="122"/>
        <end position="155"/>
    </location>
</feature>
<feature type="compositionally biased region" description="Basic and acidic residues" evidence="4">
    <location>
        <begin position="133"/>
        <end position="143"/>
    </location>
</feature>
<feature type="binding site" evidence="1">
    <location>
        <position position="19"/>
    </location>
    <ligand>
        <name>mRNA</name>
        <dbReference type="ChEBI" id="CHEBI:33699"/>
    </ligand>
    <ligandPart>
        <name>mRNA cap</name>
    </ligandPart>
</feature>
<feature type="binding site" evidence="1">
    <location>
        <position position="42"/>
    </location>
    <ligand>
        <name>mRNA</name>
        <dbReference type="ChEBI" id="CHEBI:33699"/>
    </ligand>
    <ligandPart>
        <name>mRNA cap</name>
    </ligandPart>
</feature>
<feature type="binding site" evidence="1">
    <location>
        <begin position="111"/>
        <end position="115"/>
    </location>
    <ligand>
        <name>mRNA</name>
        <dbReference type="ChEBI" id="CHEBI:33699"/>
    </ligand>
    <ligandPart>
        <name>mRNA cap</name>
    </ligandPart>
</feature>
<feature type="binding site" evidence="1">
    <location>
        <begin position="122"/>
        <end position="126"/>
    </location>
    <ligand>
        <name>mRNA</name>
        <dbReference type="ChEBI" id="CHEBI:33699"/>
    </ligand>
    <ligandPart>
        <name>mRNA cap</name>
    </ligandPart>
</feature>
<feature type="binding site" evidence="1">
    <location>
        <begin position="132"/>
        <end position="133"/>
    </location>
    <ligand>
        <name>mRNA</name>
        <dbReference type="ChEBI" id="CHEBI:33699"/>
    </ligand>
    <ligandPart>
        <name>mRNA cap</name>
    </ligandPart>
</feature>
<feature type="sequence conflict" description="In Ref. 1; ACH70847." evidence="5" ref="1">
    <original>S</original>
    <variation>I</variation>
    <location>
        <position position="3"/>
    </location>
</feature>
<gene>
    <name type="primary">ncbp2</name>
    <name type="synonym">cbp20</name>
</gene>